<feature type="chain" id="PRO_0000344669" description="Large ribosomal subunit protein bL36B">
    <location>
        <begin position="1"/>
        <end position="46"/>
    </location>
</feature>
<dbReference type="EMBL" id="CP000946">
    <property type="protein sequence ID" value="ACA78945.1"/>
    <property type="molecule type" value="Genomic_DNA"/>
</dbReference>
<dbReference type="SMR" id="B1J0X7"/>
<dbReference type="KEGG" id="ecl:EcolC_3324"/>
<dbReference type="HOGENOM" id="CLU_135723_3_1_6"/>
<dbReference type="GO" id="GO:1990904">
    <property type="term" value="C:ribonucleoprotein complex"/>
    <property type="evidence" value="ECO:0007669"/>
    <property type="project" value="UniProtKB-KW"/>
</dbReference>
<dbReference type="GO" id="GO:0005840">
    <property type="term" value="C:ribosome"/>
    <property type="evidence" value="ECO:0007669"/>
    <property type="project" value="UniProtKB-KW"/>
</dbReference>
<dbReference type="GO" id="GO:0003735">
    <property type="term" value="F:structural constituent of ribosome"/>
    <property type="evidence" value="ECO:0007669"/>
    <property type="project" value="InterPro"/>
</dbReference>
<dbReference type="GO" id="GO:0006412">
    <property type="term" value="P:translation"/>
    <property type="evidence" value="ECO:0007669"/>
    <property type="project" value="UniProtKB-UniRule"/>
</dbReference>
<dbReference type="HAMAP" id="MF_00251">
    <property type="entry name" value="Ribosomal_bL36"/>
    <property type="match status" value="1"/>
</dbReference>
<dbReference type="InterPro" id="IPR000473">
    <property type="entry name" value="Ribosomal_bL36"/>
</dbReference>
<dbReference type="InterPro" id="IPR035977">
    <property type="entry name" value="Ribosomal_bL36_sp"/>
</dbReference>
<dbReference type="InterPro" id="IPR047621">
    <property type="entry name" value="Ribosomal_L36_bact"/>
</dbReference>
<dbReference type="NCBIfam" id="NF002021">
    <property type="entry name" value="PRK00831.1"/>
    <property type="match status" value="1"/>
</dbReference>
<dbReference type="NCBIfam" id="TIGR01022">
    <property type="entry name" value="rpmJ_bact"/>
    <property type="match status" value="1"/>
</dbReference>
<dbReference type="PANTHER" id="PTHR47781">
    <property type="entry name" value="50S RIBOSOMAL PROTEIN L36 2"/>
    <property type="match status" value="1"/>
</dbReference>
<dbReference type="PANTHER" id="PTHR47781:SF1">
    <property type="entry name" value="LARGE RIBOSOMAL SUBUNIT PROTEIN BL36B"/>
    <property type="match status" value="1"/>
</dbReference>
<dbReference type="Pfam" id="PF00444">
    <property type="entry name" value="Ribosomal_L36"/>
    <property type="match status" value="1"/>
</dbReference>
<dbReference type="SUPFAM" id="SSF57840">
    <property type="entry name" value="Ribosomal protein L36"/>
    <property type="match status" value="1"/>
</dbReference>
<dbReference type="PROSITE" id="PS00828">
    <property type="entry name" value="RIBOSOMAL_L36"/>
    <property type="match status" value="1"/>
</dbReference>
<evidence type="ECO:0000255" key="1">
    <source>
        <dbReference type="HAMAP-Rule" id="MF_00251"/>
    </source>
</evidence>
<evidence type="ECO:0000305" key="2"/>
<accession>B1J0X7</accession>
<comment type="similarity">
    <text evidence="1">Belongs to the bacterial ribosomal protein bL36 family.</text>
</comment>
<keyword id="KW-0687">Ribonucleoprotein</keyword>
<keyword id="KW-0689">Ribosomal protein</keyword>
<sequence length="46" mass="5467">MKVLNSLRTAKERHPDCQIVKRKGRLYVICKSNPRFKAVQGRKKKR</sequence>
<proteinExistence type="inferred from homology"/>
<name>RL362_ECOLC</name>
<gene>
    <name evidence="1" type="primary">rpmJ2</name>
    <name type="ordered locus">EcolC_3324</name>
</gene>
<organism>
    <name type="scientific">Escherichia coli (strain ATCC 8739 / DSM 1576 / NBRC 3972 / NCIMB 8545 / WDCM 00012 / Crooks)</name>
    <dbReference type="NCBI Taxonomy" id="481805"/>
    <lineage>
        <taxon>Bacteria</taxon>
        <taxon>Pseudomonadati</taxon>
        <taxon>Pseudomonadota</taxon>
        <taxon>Gammaproteobacteria</taxon>
        <taxon>Enterobacterales</taxon>
        <taxon>Enterobacteriaceae</taxon>
        <taxon>Escherichia</taxon>
    </lineage>
</organism>
<reference key="1">
    <citation type="submission" date="2008-02" db="EMBL/GenBank/DDBJ databases">
        <title>Complete sequence of Escherichia coli C str. ATCC 8739.</title>
        <authorList>
            <person name="Copeland A."/>
            <person name="Lucas S."/>
            <person name="Lapidus A."/>
            <person name="Glavina del Rio T."/>
            <person name="Dalin E."/>
            <person name="Tice H."/>
            <person name="Bruce D."/>
            <person name="Goodwin L."/>
            <person name="Pitluck S."/>
            <person name="Kiss H."/>
            <person name="Brettin T."/>
            <person name="Detter J.C."/>
            <person name="Han C."/>
            <person name="Kuske C.R."/>
            <person name="Schmutz J."/>
            <person name="Larimer F."/>
            <person name="Land M."/>
            <person name="Hauser L."/>
            <person name="Kyrpides N."/>
            <person name="Mikhailova N."/>
            <person name="Ingram L."/>
            <person name="Richardson P."/>
        </authorList>
    </citation>
    <scope>NUCLEOTIDE SEQUENCE [LARGE SCALE GENOMIC DNA]</scope>
    <source>
        <strain>ATCC 8739 / DSM 1576 / NBRC 3972 / NCIMB 8545 / WDCM 00012 / Crooks</strain>
    </source>
</reference>
<protein>
    <recommendedName>
        <fullName evidence="1">Large ribosomal subunit protein bL36B</fullName>
    </recommendedName>
    <alternativeName>
        <fullName evidence="2">50S ribosomal protein L36 2</fullName>
    </alternativeName>
</protein>